<sequence length="199" mass="21896">MSPITDALVPMVVEQTSRGERSYDIYSRLLKERVIFLTGQVEDHMANLVVAQLLFLESENPDKDIFLYINSPGGSVTAGMSIYDTMQFIKPNVSTVCMGQACSMGAFLLAGGAKGKRYCLPNSRVMIHQPLGGFQGQASDIQIHAKEILTIKHRLNSLLAKHTGQPLEVVEGDTDRDNFMSADQAVEYGLVDSVLTQRD</sequence>
<accession>Q6LNW0</accession>
<comment type="function">
    <text evidence="1">Cleaves peptides in various proteins in a process that requires ATP hydrolysis. Has a chymotrypsin-like activity. Plays a major role in the degradation of misfolded proteins.</text>
</comment>
<comment type="catalytic activity">
    <reaction evidence="1">
        <text>Hydrolysis of proteins to small peptides in the presence of ATP and magnesium. alpha-casein is the usual test substrate. In the absence of ATP, only oligopeptides shorter than five residues are hydrolyzed (such as succinyl-Leu-Tyr-|-NHMec, and Leu-Tyr-Leu-|-Tyr-Trp, in which cleavage of the -Tyr-|-Leu- and -Tyr-|-Trp bonds also occurs).</text>
        <dbReference type="EC" id="3.4.21.92"/>
    </reaction>
</comment>
<comment type="subunit">
    <text evidence="1">Fourteen ClpP subunits assemble into 2 heptameric rings which stack back to back to give a disk-like structure with a central cavity, resembling the structure of eukaryotic proteasomes.</text>
</comment>
<comment type="subcellular location">
    <subcellularLocation>
        <location evidence="1">Cytoplasm</location>
    </subcellularLocation>
</comment>
<comment type="similarity">
    <text evidence="1">Belongs to the peptidase S14 family.</text>
</comment>
<comment type="sequence caution" evidence="2">
    <conflict type="erroneous initiation">
        <sequence resource="EMBL-CDS" id="CAG21016"/>
    </conflict>
</comment>
<reference key="1">
    <citation type="journal article" date="2005" name="Science">
        <title>Life at depth: Photobacterium profundum genome sequence and expression analysis.</title>
        <authorList>
            <person name="Vezzi A."/>
            <person name="Campanaro S."/>
            <person name="D'Angelo M."/>
            <person name="Simonato F."/>
            <person name="Vitulo N."/>
            <person name="Lauro F.M."/>
            <person name="Cestaro A."/>
            <person name="Malacrida G."/>
            <person name="Simionati B."/>
            <person name="Cannata N."/>
            <person name="Romualdi C."/>
            <person name="Bartlett D.H."/>
            <person name="Valle G."/>
        </authorList>
    </citation>
    <scope>NUCLEOTIDE SEQUENCE [LARGE SCALE GENOMIC DNA]</scope>
    <source>
        <strain>ATCC BAA-1253 / SS9</strain>
    </source>
</reference>
<dbReference type="EC" id="3.4.21.92" evidence="1"/>
<dbReference type="EMBL" id="CR378671">
    <property type="protein sequence ID" value="CAG21016.1"/>
    <property type="status" value="ALT_INIT"/>
    <property type="molecule type" value="Genomic_DNA"/>
</dbReference>
<dbReference type="SMR" id="Q6LNW0"/>
<dbReference type="STRING" id="298386.PBPRA2637"/>
<dbReference type="MEROPS" id="S14.001"/>
<dbReference type="KEGG" id="ppr:PBPRA2637"/>
<dbReference type="eggNOG" id="COG0740">
    <property type="taxonomic scope" value="Bacteria"/>
</dbReference>
<dbReference type="HOGENOM" id="CLU_058707_3_2_6"/>
<dbReference type="Proteomes" id="UP000000593">
    <property type="component" value="Chromosome 1"/>
</dbReference>
<dbReference type="GO" id="GO:0005737">
    <property type="term" value="C:cytoplasm"/>
    <property type="evidence" value="ECO:0007669"/>
    <property type="project" value="UniProtKB-SubCell"/>
</dbReference>
<dbReference type="GO" id="GO:0009368">
    <property type="term" value="C:endopeptidase Clp complex"/>
    <property type="evidence" value="ECO:0007669"/>
    <property type="project" value="TreeGrafter"/>
</dbReference>
<dbReference type="GO" id="GO:0004176">
    <property type="term" value="F:ATP-dependent peptidase activity"/>
    <property type="evidence" value="ECO:0007669"/>
    <property type="project" value="InterPro"/>
</dbReference>
<dbReference type="GO" id="GO:0051117">
    <property type="term" value="F:ATPase binding"/>
    <property type="evidence" value="ECO:0007669"/>
    <property type="project" value="TreeGrafter"/>
</dbReference>
<dbReference type="GO" id="GO:0004252">
    <property type="term" value="F:serine-type endopeptidase activity"/>
    <property type="evidence" value="ECO:0007669"/>
    <property type="project" value="UniProtKB-UniRule"/>
</dbReference>
<dbReference type="GO" id="GO:0006515">
    <property type="term" value="P:protein quality control for misfolded or incompletely synthesized proteins"/>
    <property type="evidence" value="ECO:0007669"/>
    <property type="project" value="TreeGrafter"/>
</dbReference>
<dbReference type="CDD" id="cd07017">
    <property type="entry name" value="S14_ClpP_2"/>
    <property type="match status" value="1"/>
</dbReference>
<dbReference type="FunFam" id="3.90.226.10:FF:000001">
    <property type="entry name" value="ATP-dependent Clp protease proteolytic subunit"/>
    <property type="match status" value="1"/>
</dbReference>
<dbReference type="Gene3D" id="3.90.226.10">
    <property type="entry name" value="2-enoyl-CoA Hydratase, Chain A, domain 1"/>
    <property type="match status" value="1"/>
</dbReference>
<dbReference type="HAMAP" id="MF_00444">
    <property type="entry name" value="ClpP"/>
    <property type="match status" value="1"/>
</dbReference>
<dbReference type="InterPro" id="IPR001907">
    <property type="entry name" value="ClpP"/>
</dbReference>
<dbReference type="InterPro" id="IPR029045">
    <property type="entry name" value="ClpP/crotonase-like_dom_sf"/>
</dbReference>
<dbReference type="InterPro" id="IPR023562">
    <property type="entry name" value="ClpP/TepA"/>
</dbReference>
<dbReference type="InterPro" id="IPR033135">
    <property type="entry name" value="ClpP_His_AS"/>
</dbReference>
<dbReference type="InterPro" id="IPR018215">
    <property type="entry name" value="ClpP_Ser_AS"/>
</dbReference>
<dbReference type="NCBIfam" id="TIGR00493">
    <property type="entry name" value="clpP"/>
    <property type="match status" value="1"/>
</dbReference>
<dbReference type="NCBIfam" id="NF001368">
    <property type="entry name" value="PRK00277.1"/>
    <property type="match status" value="1"/>
</dbReference>
<dbReference type="NCBIfam" id="NF009205">
    <property type="entry name" value="PRK12553.1"/>
    <property type="match status" value="1"/>
</dbReference>
<dbReference type="PANTHER" id="PTHR10381">
    <property type="entry name" value="ATP-DEPENDENT CLP PROTEASE PROTEOLYTIC SUBUNIT"/>
    <property type="match status" value="1"/>
</dbReference>
<dbReference type="PANTHER" id="PTHR10381:SF70">
    <property type="entry name" value="ATP-DEPENDENT CLP PROTEASE PROTEOLYTIC SUBUNIT"/>
    <property type="match status" value="1"/>
</dbReference>
<dbReference type="Pfam" id="PF00574">
    <property type="entry name" value="CLP_protease"/>
    <property type="match status" value="1"/>
</dbReference>
<dbReference type="PRINTS" id="PR00127">
    <property type="entry name" value="CLPPROTEASEP"/>
</dbReference>
<dbReference type="SUPFAM" id="SSF52096">
    <property type="entry name" value="ClpP/crotonase"/>
    <property type="match status" value="1"/>
</dbReference>
<dbReference type="PROSITE" id="PS00382">
    <property type="entry name" value="CLP_PROTEASE_HIS"/>
    <property type="match status" value="1"/>
</dbReference>
<dbReference type="PROSITE" id="PS00381">
    <property type="entry name" value="CLP_PROTEASE_SER"/>
    <property type="match status" value="1"/>
</dbReference>
<proteinExistence type="inferred from homology"/>
<organism>
    <name type="scientific">Photobacterium profundum (strain SS9)</name>
    <dbReference type="NCBI Taxonomy" id="298386"/>
    <lineage>
        <taxon>Bacteria</taxon>
        <taxon>Pseudomonadati</taxon>
        <taxon>Pseudomonadota</taxon>
        <taxon>Gammaproteobacteria</taxon>
        <taxon>Vibrionales</taxon>
        <taxon>Vibrionaceae</taxon>
        <taxon>Photobacterium</taxon>
    </lineage>
</organism>
<protein>
    <recommendedName>
        <fullName evidence="1">ATP-dependent Clp protease proteolytic subunit</fullName>
        <ecNumber evidence="1">3.4.21.92</ecNumber>
    </recommendedName>
    <alternativeName>
        <fullName evidence="1">Endopeptidase Clp</fullName>
    </alternativeName>
</protein>
<name>CLPP_PHOPR</name>
<evidence type="ECO:0000255" key="1">
    <source>
        <dbReference type="HAMAP-Rule" id="MF_00444"/>
    </source>
</evidence>
<evidence type="ECO:0000305" key="2"/>
<feature type="chain" id="PRO_0000179613" description="ATP-dependent Clp protease proteolytic subunit">
    <location>
        <begin position="1"/>
        <end position="199"/>
    </location>
</feature>
<feature type="active site" description="Nucleophile" evidence="1">
    <location>
        <position position="103"/>
    </location>
</feature>
<feature type="active site" evidence="1">
    <location>
        <position position="128"/>
    </location>
</feature>
<keyword id="KW-0963">Cytoplasm</keyword>
<keyword id="KW-0378">Hydrolase</keyword>
<keyword id="KW-0645">Protease</keyword>
<keyword id="KW-1185">Reference proteome</keyword>
<keyword id="KW-0720">Serine protease</keyword>
<gene>
    <name evidence="1" type="primary">clpP</name>
    <name type="ordered locus">PBPRA2637</name>
</gene>